<proteinExistence type="evidence at transcript level"/>
<reference key="1">
    <citation type="journal article" date="2000" name="Nature">
        <title>Sequence and analysis of chromosome 5 of the plant Arabidopsis thaliana.</title>
        <authorList>
            <person name="Tabata S."/>
            <person name="Kaneko T."/>
            <person name="Nakamura Y."/>
            <person name="Kotani H."/>
            <person name="Kato T."/>
            <person name="Asamizu E."/>
            <person name="Miyajima N."/>
            <person name="Sasamoto S."/>
            <person name="Kimura T."/>
            <person name="Hosouchi T."/>
            <person name="Kawashima K."/>
            <person name="Kohara M."/>
            <person name="Matsumoto M."/>
            <person name="Matsuno A."/>
            <person name="Muraki A."/>
            <person name="Nakayama S."/>
            <person name="Nakazaki N."/>
            <person name="Naruo K."/>
            <person name="Okumura S."/>
            <person name="Shinpo S."/>
            <person name="Takeuchi C."/>
            <person name="Wada T."/>
            <person name="Watanabe A."/>
            <person name="Yamada M."/>
            <person name="Yasuda M."/>
            <person name="Sato S."/>
            <person name="de la Bastide M."/>
            <person name="Huang E."/>
            <person name="Spiegel L."/>
            <person name="Gnoj L."/>
            <person name="O'Shaughnessy A."/>
            <person name="Preston R."/>
            <person name="Habermann K."/>
            <person name="Murray J."/>
            <person name="Johnson D."/>
            <person name="Rohlfing T."/>
            <person name="Nelson J."/>
            <person name="Stoneking T."/>
            <person name="Pepin K."/>
            <person name="Spieth J."/>
            <person name="Sekhon M."/>
            <person name="Armstrong J."/>
            <person name="Becker M."/>
            <person name="Belter E."/>
            <person name="Cordum H."/>
            <person name="Cordes M."/>
            <person name="Courtney L."/>
            <person name="Courtney W."/>
            <person name="Dante M."/>
            <person name="Du H."/>
            <person name="Edwards J."/>
            <person name="Fryman J."/>
            <person name="Haakensen B."/>
            <person name="Lamar E."/>
            <person name="Latreille P."/>
            <person name="Leonard S."/>
            <person name="Meyer R."/>
            <person name="Mulvaney E."/>
            <person name="Ozersky P."/>
            <person name="Riley A."/>
            <person name="Strowmatt C."/>
            <person name="Wagner-McPherson C."/>
            <person name="Wollam A."/>
            <person name="Yoakum M."/>
            <person name="Bell M."/>
            <person name="Dedhia N."/>
            <person name="Parnell L."/>
            <person name="Shah R."/>
            <person name="Rodriguez M."/>
            <person name="Hoon See L."/>
            <person name="Vil D."/>
            <person name="Baker J."/>
            <person name="Kirchoff K."/>
            <person name="Toth K."/>
            <person name="King L."/>
            <person name="Bahret A."/>
            <person name="Miller B."/>
            <person name="Marra M.A."/>
            <person name="Martienssen R."/>
            <person name="McCombie W.R."/>
            <person name="Wilson R.K."/>
            <person name="Murphy G."/>
            <person name="Bancroft I."/>
            <person name="Volckaert G."/>
            <person name="Wambutt R."/>
            <person name="Duesterhoeft A."/>
            <person name="Stiekema W."/>
            <person name="Pohl T."/>
            <person name="Entian K.-D."/>
            <person name="Terryn N."/>
            <person name="Hartley N."/>
            <person name="Bent E."/>
            <person name="Johnson S."/>
            <person name="Langham S.-A."/>
            <person name="McCullagh B."/>
            <person name="Robben J."/>
            <person name="Grymonprez B."/>
            <person name="Zimmermann W."/>
            <person name="Ramsperger U."/>
            <person name="Wedler H."/>
            <person name="Balke K."/>
            <person name="Wedler E."/>
            <person name="Peters S."/>
            <person name="van Staveren M."/>
            <person name="Dirkse W."/>
            <person name="Mooijman P."/>
            <person name="Klein Lankhorst R."/>
            <person name="Weitzenegger T."/>
            <person name="Bothe G."/>
            <person name="Rose M."/>
            <person name="Hauf J."/>
            <person name="Berneiser S."/>
            <person name="Hempel S."/>
            <person name="Feldpausch M."/>
            <person name="Lamberth S."/>
            <person name="Villarroel R."/>
            <person name="Gielen J."/>
            <person name="Ardiles W."/>
            <person name="Bents O."/>
            <person name="Lemcke K."/>
            <person name="Kolesov G."/>
            <person name="Mayer K.F.X."/>
            <person name="Rudd S."/>
            <person name="Schoof H."/>
            <person name="Schueller C."/>
            <person name="Zaccaria P."/>
            <person name="Mewes H.-W."/>
            <person name="Bevan M."/>
            <person name="Fransz P.F."/>
        </authorList>
    </citation>
    <scope>NUCLEOTIDE SEQUENCE [LARGE SCALE GENOMIC DNA]</scope>
    <source>
        <strain>cv. Columbia</strain>
    </source>
</reference>
<reference key="2">
    <citation type="journal article" date="2017" name="Plant J.">
        <title>Araport11: a complete reannotation of the Arabidopsis thaliana reference genome.</title>
        <authorList>
            <person name="Cheng C.Y."/>
            <person name="Krishnakumar V."/>
            <person name="Chan A.P."/>
            <person name="Thibaud-Nissen F."/>
            <person name="Schobel S."/>
            <person name="Town C.D."/>
        </authorList>
    </citation>
    <scope>GENOME REANNOTATION</scope>
    <source>
        <strain>cv. Columbia</strain>
    </source>
</reference>
<reference key="3">
    <citation type="journal article" date="2006" name="Plant Biotechnol. J.">
        <title>Simultaneous high-throughput recombinational cloning of open reading frames in closed and open configurations.</title>
        <authorList>
            <person name="Underwood B.A."/>
            <person name="Vanderhaeghen R."/>
            <person name="Whitford R."/>
            <person name="Town C.D."/>
            <person name="Hilson P."/>
        </authorList>
    </citation>
    <scope>NUCLEOTIDE SEQUENCE [LARGE SCALE MRNA]</scope>
    <source>
        <strain>cv. Columbia</strain>
    </source>
</reference>
<reference key="4">
    <citation type="journal article" date="2005" name="Nature">
        <title>A new family of RhoGEFs activates the Rop molecular switch in plants.</title>
        <authorList>
            <person name="Berken A."/>
            <person name="Thomas C."/>
            <person name="Wittinghofer A."/>
        </authorList>
    </citation>
    <scope>GENE FAMILY</scope>
</reference>
<protein>
    <recommendedName>
        <fullName>Rop guanine nucleotide exchange factor 10</fullName>
        <shortName>AtRopGEF10</shortName>
    </recommendedName>
    <alternativeName>
        <fullName>Rho of plants guanine nucleotide exchange factor 10</fullName>
    </alternativeName>
</protein>
<gene>
    <name type="primary">ROPGEF10</name>
    <name type="ordered locus">At5g19560</name>
</gene>
<evidence type="ECO:0000250" key="1"/>
<evidence type="ECO:0000255" key="2">
    <source>
        <dbReference type="PROSITE-ProRule" id="PRU00663"/>
    </source>
</evidence>
<evidence type="ECO:0000256" key="3">
    <source>
        <dbReference type="SAM" id="MobiDB-lite"/>
    </source>
</evidence>
<evidence type="ECO:0000305" key="4"/>
<comment type="function">
    <text evidence="1">Guanine-nucleotide exchange factor (GEF) that acts as an activator of Rop (Rho of plants) GTPases by promoting the exchange of GDP for GTP.</text>
</comment>
<comment type="domain">
    <text evidence="1">The PRONE (plant-specific Rop nucleotide exchanger) domain is responsible for the GEF activity.</text>
</comment>
<comment type="sequence caution" evidence="4">
    <conflict type="erroneous termination">
        <sequence resource="EMBL-CDS" id="ABK28705"/>
    </conflict>
    <text>Extended C-terminus.</text>
</comment>
<dbReference type="EMBL" id="AF296830">
    <property type="status" value="NOT_ANNOTATED_CDS"/>
    <property type="molecule type" value="Genomic_DNA"/>
</dbReference>
<dbReference type="EMBL" id="CP002688">
    <property type="protein sequence ID" value="AED92725.1"/>
    <property type="molecule type" value="Genomic_DNA"/>
</dbReference>
<dbReference type="EMBL" id="CP002688">
    <property type="protein sequence ID" value="ANM69740.1"/>
    <property type="molecule type" value="Genomic_DNA"/>
</dbReference>
<dbReference type="EMBL" id="DQ459196">
    <property type="protein sequence ID" value="ABE97194.1"/>
    <property type="molecule type" value="mRNA"/>
</dbReference>
<dbReference type="EMBL" id="DQ653297">
    <property type="protein sequence ID" value="ABK28705.1"/>
    <property type="status" value="ALT_SEQ"/>
    <property type="molecule type" value="mRNA"/>
</dbReference>
<dbReference type="RefSeq" id="NP_001318601.1">
    <property type="nucleotide sequence ID" value="NM_001343611.1"/>
</dbReference>
<dbReference type="RefSeq" id="NP_197457.1">
    <property type="nucleotide sequence ID" value="NM_121961.2"/>
</dbReference>
<dbReference type="SMR" id="Q1KS66"/>
<dbReference type="BioGRID" id="17352">
    <property type="interactions" value="2"/>
</dbReference>
<dbReference type="DIP" id="DIP-59397N"/>
<dbReference type="FunCoup" id="Q1KS66">
    <property type="interactions" value="31"/>
</dbReference>
<dbReference type="IntAct" id="Q1KS66">
    <property type="interactions" value="2"/>
</dbReference>
<dbReference type="STRING" id="3702.Q1KS66"/>
<dbReference type="iPTMnet" id="Q1KS66"/>
<dbReference type="PaxDb" id="3702-AT5G19560.1"/>
<dbReference type="EnsemblPlants" id="AT5G19560.1">
    <property type="protein sequence ID" value="AT5G19560.1"/>
    <property type="gene ID" value="AT5G19560"/>
</dbReference>
<dbReference type="EnsemblPlants" id="AT5G19560.5">
    <property type="protein sequence ID" value="AT5G19560.5"/>
    <property type="gene ID" value="AT5G19560"/>
</dbReference>
<dbReference type="GeneID" id="832076"/>
<dbReference type="Gramene" id="AT5G19560.1">
    <property type="protein sequence ID" value="AT5G19560.1"/>
    <property type="gene ID" value="AT5G19560"/>
</dbReference>
<dbReference type="Gramene" id="AT5G19560.5">
    <property type="protein sequence ID" value="AT5G19560.5"/>
    <property type="gene ID" value="AT5G19560"/>
</dbReference>
<dbReference type="KEGG" id="ath:AT5G19560"/>
<dbReference type="Araport" id="AT5G19560"/>
<dbReference type="TAIR" id="AT5G19560">
    <property type="gene designation" value="ROPGEF10"/>
</dbReference>
<dbReference type="eggNOG" id="ENOG502QSGR">
    <property type="taxonomic scope" value="Eukaryota"/>
</dbReference>
<dbReference type="HOGENOM" id="CLU_019073_1_0_1"/>
<dbReference type="InParanoid" id="Q1KS66"/>
<dbReference type="OMA" id="SKQMGKN"/>
<dbReference type="OrthoDB" id="1053009at2759"/>
<dbReference type="PhylomeDB" id="Q1KS66"/>
<dbReference type="PRO" id="PR:Q1KS66"/>
<dbReference type="Proteomes" id="UP000006548">
    <property type="component" value="Chromosome 5"/>
</dbReference>
<dbReference type="ExpressionAtlas" id="Q1KS66">
    <property type="expression patterns" value="baseline and differential"/>
</dbReference>
<dbReference type="GO" id="GO:0016324">
    <property type="term" value="C:apical plasma membrane"/>
    <property type="evidence" value="ECO:0000314"/>
    <property type="project" value="TAIR"/>
</dbReference>
<dbReference type="GO" id="GO:0005085">
    <property type="term" value="F:guanyl-nucleotide exchange factor activity"/>
    <property type="evidence" value="ECO:0000250"/>
    <property type="project" value="TAIR"/>
</dbReference>
<dbReference type="FunFam" id="1.20.58.2010:FF:000001">
    <property type="entry name" value="Rop guanine nucleotide exchange factor 14"/>
    <property type="match status" value="1"/>
</dbReference>
<dbReference type="FunFam" id="1.20.58.2010:FF:000003">
    <property type="entry name" value="Rop guanine nucleotide exchange factor 14"/>
    <property type="match status" value="1"/>
</dbReference>
<dbReference type="FunFam" id="1.20.58.1310:FF:000001">
    <property type="entry name" value="Rop guanine nucleotide exchange factor 9"/>
    <property type="match status" value="1"/>
</dbReference>
<dbReference type="Gene3D" id="1.20.58.2010">
    <property type="entry name" value="PRONE domain, subdomain 1"/>
    <property type="match status" value="1"/>
</dbReference>
<dbReference type="Gene3D" id="1.20.58.1310">
    <property type="entry name" value="PRONE domain, subdomain 2"/>
    <property type="match status" value="1"/>
</dbReference>
<dbReference type="InterPro" id="IPR005512">
    <property type="entry name" value="PRONE_dom"/>
</dbReference>
<dbReference type="InterPro" id="IPR038937">
    <property type="entry name" value="RopGEF"/>
</dbReference>
<dbReference type="PANTHER" id="PTHR33101">
    <property type="entry name" value="ROP GUANINE NUCLEOTIDE EXCHANGE FACTOR 1"/>
    <property type="match status" value="1"/>
</dbReference>
<dbReference type="PANTHER" id="PTHR33101:SF65">
    <property type="entry name" value="ROP GUANINE NUCLEOTIDE EXCHANGE FACTOR 10"/>
    <property type="match status" value="1"/>
</dbReference>
<dbReference type="Pfam" id="PF03759">
    <property type="entry name" value="PRONE"/>
    <property type="match status" value="1"/>
</dbReference>
<dbReference type="PROSITE" id="PS51334">
    <property type="entry name" value="PRONE"/>
    <property type="match status" value="1"/>
</dbReference>
<name>ROGFA_ARATH</name>
<accession>Q1KS66</accession>
<accession>A0MFH1</accession>
<keyword id="KW-0344">Guanine-nucleotide releasing factor</keyword>
<keyword id="KW-1185">Reference proteome</keyword>
<feature type="chain" id="PRO_0000423895" description="Rop guanine nucleotide exchange factor 10">
    <location>
        <begin position="1"/>
        <end position="493"/>
    </location>
</feature>
<feature type="domain" description="PRONE" evidence="2">
    <location>
        <begin position="35"/>
        <end position="401"/>
    </location>
</feature>
<feature type="region of interest" description="Disordered" evidence="3">
    <location>
        <begin position="1"/>
        <end position="45"/>
    </location>
</feature>
<feature type="region of interest" description="Disordered" evidence="3">
    <location>
        <begin position="400"/>
        <end position="423"/>
    </location>
</feature>
<feature type="compositionally biased region" description="Basic and acidic residues" evidence="3">
    <location>
        <begin position="17"/>
        <end position="27"/>
    </location>
</feature>
<organism>
    <name type="scientific">Arabidopsis thaliana</name>
    <name type="common">Mouse-ear cress</name>
    <dbReference type="NCBI Taxonomy" id="3702"/>
    <lineage>
        <taxon>Eukaryota</taxon>
        <taxon>Viridiplantae</taxon>
        <taxon>Streptophyta</taxon>
        <taxon>Embryophyta</taxon>
        <taxon>Tracheophyta</taxon>
        <taxon>Spermatophyta</taxon>
        <taxon>Magnoliopsida</taxon>
        <taxon>eudicotyledons</taxon>
        <taxon>Gunneridae</taxon>
        <taxon>Pentapetalae</taxon>
        <taxon>rosids</taxon>
        <taxon>malvids</taxon>
        <taxon>Brassicales</taxon>
        <taxon>Brassicaceae</taxon>
        <taxon>Camelineae</taxon>
        <taxon>Arabidopsis</taxon>
    </lineage>
</organism>
<sequence>MFDGRNSGHSSFSSRGDGMHTPEHELAGHAAPSTRRGKQNRRSDMEVMKERFAKLLLGEDMSGGGTGETSALALSNAITKLADSMFGEQMKLQPMYPETKENWRKEMGWLLSVIDHIVQFVPSRQMGKNGQFTEIMVTKQRDDLLTNIPALRKLDSVLLETLDNFKDQKDFWYVPRDMEDADHNGDWRRDENWWLPVVKVPTDGLSEESRRWLQNQKDSVAQVLKAATAINAHVLSEMHVPENYIDSLPKNGKTSLGDFLYKSITEESFDPDYFVSFLDLSTEHKVLDLKNRIEASMVIWKRKMCQKEKDGKSQWGSTVSLEKRELFEVRAETILVMLKQQFPGIPQSSLEVSKIKNNKDVGQAILESYSRVLESLASKIMSRIEDVLEADRLVQRQLMGEAETRSESEAESEYEETEKVVAAETPNSRKLSDFIGWRLSSDTKKHSSMSDIEFFHKVEQEKEKPMMKSPRALPKKFSYLAKLENMRSPSDRH</sequence>